<accession>A0AUJ5</accession>
<evidence type="ECO:0000250" key="1"/>
<evidence type="ECO:0000250" key="2">
    <source>
        <dbReference type="UniProtKB" id="P04517"/>
    </source>
</evidence>
<evidence type="ECO:0000250" key="3">
    <source>
        <dbReference type="UniProtKB" id="P09814"/>
    </source>
</evidence>
<evidence type="ECO:0000250" key="4">
    <source>
        <dbReference type="UniProtKB" id="P13529"/>
    </source>
</evidence>
<evidence type="ECO:0000250" key="5">
    <source>
        <dbReference type="UniProtKB" id="P17767"/>
    </source>
</evidence>
<evidence type="ECO:0000250" key="6">
    <source>
        <dbReference type="UniProtKB" id="P18247"/>
    </source>
</evidence>
<evidence type="ECO:0000250" key="7">
    <source>
        <dbReference type="UniProtKB" id="P89509"/>
    </source>
</evidence>
<evidence type="ECO:0000255" key="8">
    <source>
        <dbReference type="PROSITE-ProRule" id="PRU00539"/>
    </source>
</evidence>
<evidence type="ECO:0000255" key="9">
    <source>
        <dbReference type="PROSITE-ProRule" id="PRU00541"/>
    </source>
</evidence>
<evidence type="ECO:0000255" key="10">
    <source>
        <dbReference type="PROSITE-ProRule" id="PRU00542"/>
    </source>
</evidence>
<evidence type="ECO:0000255" key="11">
    <source>
        <dbReference type="PROSITE-ProRule" id="PRU00766"/>
    </source>
</evidence>
<evidence type="ECO:0000255" key="12">
    <source>
        <dbReference type="PROSITE-ProRule" id="PRU00805"/>
    </source>
</evidence>
<evidence type="ECO:0000255" key="13">
    <source>
        <dbReference type="PROSITE-ProRule" id="PRU01080"/>
    </source>
</evidence>
<evidence type="ECO:0000255" key="14">
    <source>
        <dbReference type="PROSITE-ProRule" id="PRU01219"/>
    </source>
</evidence>
<evidence type="ECO:0000256" key="15">
    <source>
        <dbReference type="SAM" id="MobiDB-lite"/>
    </source>
</evidence>
<evidence type="ECO:0000305" key="16"/>
<evidence type="ECO:0000305" key="17">
    <source>
    </source>
</evidence>
<dbReference type="EC" id="3.4.21.-"/>
<dbReference type="EC" id="3.4.22.45" evidence="2"/>
<dbReference type="EC" id="3.6.4.-"/>
<dbReference type="EC" id="3.4.22.44"/>
<dbReference type="EC" id="2.7.7.48"/>
<dbReference type="EMBL" id="AY994084">
    <property type="protein sequence ID" value="AAX87001.1"/>
    <property type="molecule type" value="Genomic_RNA"/>
</dbReference>
<dbReference type="RefSeq" id="YP_851006.1">
    <property type="nucleotide sequence ID" value="NC_008558.1"/>
</dbReference>
<dbReference type="GeneID" id="5076635"/>
<dbReference type="KEGG" id="vg:5076635"/>
<dbReference type="Proteomes" id="UP000006703">
    <property type="component" value="Segment"/>
</dbReference>
<dbReference type="GO" id="GO:0019029">
    <property type="term" value="C:helical viral capsid"/>
    <property type="evidence" value="ECO:0007669"/>
    <property type="project" value="UniProtKB-KW"/>
</dbReference>
<dbReference type="GO" id="GO:0044161">
    <property type="term" value="C:host cell cytoplasmic vesicle"/>
    <property type="evidence" value="ECO:0007669"/>
    <property type="project" value="UniProtKB-SubCell"/>
</dbReference>
<dbReference type="GO" id="GO:0005524">
    <property type="term" value="F:ATP binding"/>
    <property type="evidence" value="ECO:0007669"/>
    <property type="project" value="UniProtKB-KW"/>
</dbReference>
<dbReference type="GO" id="GO:0004197">
    <property type="term" value="F:cysteine-type endopeptidase activity"/>
    <property type="evidence" value="ECO:0007669"/>
    <property type="project" value="InterPro"/>
</dbReference>
<dbReference type="GO" id="GO:0051213">
    <property type="term" value="F:dioxygenase activity"/>
    <property type="evidence" value="ECO:0007669"/>
    <property type="project" value="UniProtKB-KW"/>
</dbReference>
<dbReference type="GO" id="GO:0004386">
    <property type="term" value="F:helicase activity"/>
    <property type="evidence" value="ECO:0007669"/>
    <property type="project" value="UniProtKB-KW"/>
</dbReference>
<dbReference type="GO" id="GO:0016818">
    <property type="term" value="F:hydrolase activity, acting on acid anhydrides, in phosphorus-containing anhydrides"/>
    <property type="evidence" value="ECO:0007669"/>
    <property type="project" value="InterPro"/>
</dbReference>
<dbReference type="GO" id="GO:0046872">
    <property type="term" value="F:metal ion binding"/>
    <property type="evidence" value="ECO:0007669"/>
    <property type="project" value="UniProtKB-KW"/>
</dbReference>
<dbReference type="GO" id="GO:0003723">
    <property type="term" value="F:RNA binding"/>
    <property type="evidence" value="ECO:0007669"/>
    <property type="project" value="InterPro"/>
</dbReference>
<dbReference type="GO" id="GO:0003968">
    <property type="term" value="F:RNA-directed RNA polymerase activity"/>
    <property type="evidence" value="ECO:0007669"/>
    <property type="project" value="UniProtKB-KW"/>
</dbReference>
<dbReference type="GO" id="GO:0008236">
    <property type="term" value="F:serine-type peptidase activity"/>
    <property type="evidence" value="ECO:0007669"/>
    <property type="project" value="UniProtKB-KW"/>
</dbReference>
<dbReference type="GO" id="GO:0005198">
    <property type="term" value="F:structural molecule activity"/>
    <property type="evidence" value="ECO:0007669"/>
    <property type="project" value="InterPro"/>
</dbReference>
<dbReference type="GO" id="GO:0006351">
    <property type="term" value="P:DNA-templated transcription"/>
    <property type="evidence" value="ECO:0007669"/>
    <property type="project" value="InterPro"/>
</dbReference>
<dbReference type="GO" id="GO:0006508">
    <property type="term" value="P:proteolysis"/>
    <property type="evidence" value="ECO:0007669"/>
    <property type="project" value="UniProtKB-KW"/>
</dbReference>
<dbReference type="GO" id="GO:0052170">
    <property type="term" value="P:symbiont-mediated suppression of host innate immune response"/>
    <property type="evidence" value="ECO:0007669"/>
    <property type="project" value="UniProtKB-KW"/>
</dbReference>
<dbReference type="GO" id="GO:0039694">
    <property type="term" value="P:viral RNA genome replication"/>
    <property type="evidence" value="ECO:0007669"/>
    <property type="project" value="InterPro"/>
</dbReference>
<dbReference type="CDD" id="cd23175">
    <property type="entry name" value="ps-ssRNAv_Potyviridae_RdRp"/>
    <property type="match status" value="1"/>
</dbReference>
<dbReference type="Gene3D" id="3.30.70.270">
    <property type="match status" value="1"/>
</dbReference>
<dbReference type="Gene3D" id="2.60.120.590">
    <property type="entry name" value="Alpha-ketoglutarate-dependent dioxygenase AlkB-like"/>
    <property type="match status" value="1"/>
</dbReference>
<dbReference type="Gene3D" id="3.90.70.150">
    <property type="entry name" value="Helper component proteinase"/>
    <property type="match status" value="1"/>
</dbReference>
<dbReference type="Gene3D" id="3.40.50.300">
    <property type="entry name" value="P-loop containing nucleotide triphosphate hydrolases"/>
    <property type="match status" value="2"/>
</dbReference>
<dbReference type="Gene3D" id="2.40.10.10">
    <property type="entry name" value="Trypsin-like serine proteases"/>
    <property type="match status" value="2"/>
</dbReference>
<dbReference type="InterPro" id="IPR037151">
    <property type="entry name" value="AlkB-like_sf"/>
</dbReference>
<dbReference type="InterPro" id="IPR011545">
    <property type="entry name" value="DEAD/DEAH_box_helicase_dom"/>
</dbReference>
<dbReference type="InterPro" id="IPR043502">
    <property type="entry name" value="DNA/RNA_pol_sf"/>
</dbReference>
<dbReference type="InterPro" id="IPR001456">
    <property type="entry name" value="HC-pro"/>
</dbReference>
<dbReference type="InterPro" id="IPR031159">
    <property type="entry name" value="HC_PRO_CPD_dom"/>
</dbReference>
<dbReference type="InterPro" id="IPR042308">
    <property type="entry name" value="HC_PRO_CPD_sf"/>
</dbReference>
<dbReference type="InterPro" id="IPR014001">
    <property type="entry name" value="Helicase_ATP-bd"/>
</dbReference>
<dbReference type="InterPro" id="IPR001650">
    <property type="entry name" value="Helicase_C-like"/>
</dbReference>
<dbReference type="InterPro" id="IPR005123">
    <property type="entry name" value="Oxoglu/Fe-dep_dioxygenase_dom"/>
</dbReference>
<dbReference type="InterPro" id="IPR027417">
    <property type="entry name" value="P-loop_NTPase"/>
</dbReference>
<dbReference type="InterPro" id="IPR002540">
    <property type="entry name" value="Pept_S30_P1_potyvir"/>
</dbReference>
<dbReference type="InterPro" id="IPR009003">
    <property type="entry name" value="Peptidase_S1_PA"/>
</dbReference>
<dbReference type="InterPro" id="IPR043504">
    <property type="entry name" value="Peptidase_S1_PA_chymotrypsin"/>
</dbReference>
<dbReference type="InterPro" id="IPR001592">
    <property type="entry name" value="Poty_coat"/>
</dbReference>
<dbReference type="InterPro" id="IPR001730">
    <property type="entry name" value="Potyv_NIa-pro_dom"/>
</dbReference>
<dbReference type="InterPro" id="IPR039560">
    <property type="entry name" value="Potyvirid-P3"/>
</dbReference>
<dbReference type="InterPro" id="IPR013648">
    <property type="entry name" value="PP_Potyviridae"/>
</dbReference>
<dbReference type="InterPro" id="IPR043128">
    <property type="entry name" value="Rev_trsase/Diguanyl_cyclase"/>
</dbReference>
<dbReference type="InterPro" id="IPR001205">
    <property type="entry name" value="RNA-dir_pol_C"/>
</dbReference>
<dbReference type="InterPro" id="IPR007094">
    <property type="entry name" value="RNA-dir_pol_PSvirus"/>
</dbReference>
<dbReference type="PANTHER" id="PTHR18934">
    <property type="entry name" value="ATP-DEPENDENT RNA HELICASE"/>
    <property type="match status" value="1"/>
</dbReference>
<dbReference type="PANTHER" id="PTHR18934:SF91">
    <property type="entry name" value="PRE-MRNA-SPLICING FACTOR ATP-DEPENDENT RNA HELICASE PRP16"/>
    <property type="match status" value="1"/>
</dbReference>
<dbReference type="Pfam" id="PF00270">
    <property type="entry name" value="DEAD"/>
    <property type="match status" value="1"/>
</dbReference>
<dbReference type="Pfam" id="PF00271">
    <property type="entry name" value="Helicase_C"/>
    <property type="match status" value="1"/>
</dbReference>
<dbReference type="Pfam" id="PF00863">
    <property type="entry name" value="Peptidase_C4"/>
    <property type="match status" value="1"/>
</dbReference>
<dbReference type="Pfam" id="PF00851">
    <property type="entry name" value="Peptidase_C6"/>
    <property type="match status" value="1"/>
</dbReference>
<dbReference type="Pfam" id="PF01577">
    <property type="entry name" value="Peptidase_S30"/>
    <property type="match status" value="1"/>
</dbReference>
<dbReference type="Pfam" id="PF00767">
    <property type="entry name" value="Poty_coat"/>
    <property type="match status" value="1"/>
</dbReference>
<dbReference type="Pfam" id="PF08440">
    <property type="entry name" value="Poty_PP"/>
    <property type="match status" value="1"/>
</dbReference>
<dbReference type="Pfam" id="PF13608">
    <property type="entry name" value="Potyvirid-P3"/>
    <property type="match status" value="1"/>
</dbReference>
<dbReference type="Pfam" id="PF00680">
    <property type="entry name" value="RdRP_1"/>
    <property type="match status" value="1"/>
</dbReference>
<dbReference type="PRINTS" id="PR00966">
    <property type="entry name" value="NIAPOTYPTASE"/>
</dbReference>
<dbReference type="SMART" id="SM00487">
    <property type="entry name" value="DEXDc"/>
    <property type="match status" value="1"/>
</dbReference>
<dbReference type="SMART" id="SM00490">
    <property type="entry name" value="HELICc"/>
    <property type="match status" value="1"/>
</dbReference>
<dbReference type="SUPFAM" id="SSF51197">
    <property type="entry name" value="Clavaminate synthase-like"/>
    <property type="match status" value="1"/>
</dbReference>
<dbReference type="SUPFAM" id="SSF56672">
    <property type="entry name" value="DNA/RNA polymerases"/>
    <property type="match status" value="1"/>
</dbReference>
<dbReference type="SUPFAM" id="SSF52540">
    <property type="entry name" value="P-loop containing nucleoside triphosphate hydrolases"/>
    <property type="match status" value="1"/>
</dbReference>
<dbReference type="SUPFAM" id="SSF50494">
    <property type="entry name" value="Trypsin-like serine proteases"/>
    <property type="match status" value="1"/>
</dbReference>
<dbReference type="PROSITE" id="PS51471">
    <property type="entry name" value="FE2OG_OXY"/>
    <property type="match status" value="1"/>
</dbReference>
<dbReference type="PROSITE" id="PS51744">
    <property type="entry name" value="HC_PRO_CPD"/>
    <property type="match status" value="1"/>
</dbReference>
<dbReference type="PROSITE" id="PS51192">
    <property type="entry name" value="HELICASE_ATP_BIND_1"/>
    <property type="match status" value="1"/>
</dbReference>
<dbReference type="PROSITE" id="PS51194">
    <property type="entry name" value="HELICASE_CTER"/>
    <property type="match status" value="1"/>
</dbReference>
<dbReference type="PROSITE" id="PS51436">
    <property type="entry name" value="POTYVIRUS_NIA_PRO"/>
    <property type="match status" value="1"/>
</dbReference>
<dbReference type="PROSITE" id="PS51871">
    <property type="entry name" value="PV_P1_PRO"/>
    <property type="match status" value="1"/>
</dbReference>
<dbReference type="PROSITE" id="PS50507">
    <property type="entry name" value="RDRP_SSRNA_POS"/>
    <property type="match status" value="1"/>
</dbReference>
<comment type="function">
    <molecule>Helper component proteinase</molecule>
    <text evidence="2">Required for aphid transmission and also has proteolytic activity. Only cleaves a Gly-Gly dipeptide at its own C-terminus. Interacts with virions and aphid stylets. Acts as a suppressor of RNA-mediated gene silencing, also known as post-transcriptional gene silencing (PTGS), a mechanism of plant viral defense that limits the accumulation of viral RNAs. May have RNA-binding activity.</text>
</comment>
<comment type="function">
    <molecule>Cytoplasmic inclusion protein</molecule>
    <text>Has helicase activity. It may be involved in replication.</text>
</comment>
<comment type="function">
    <molecule>6 kDa protein 1</molecule>
    <text evidence="4 7">Indispensable for virus replication (By similarity). Reduces the abundance of host transcripts related to jasmonic acid biosynthesis therefore altering the host defenses (By similarity). In order to increase its own stability, decreases host protein degradation pathways (By similarity).</text>
</comment>
<comment type="function">
    <molecule>6 kDa protein 2</molecule>
    <text evidence="3">Indispensable for virus replication.</text>
</comment>
<comment type="function">
    <molecule>Viral genome-linked protein</molecule>
    <text evidence="6">Mediates the cap-independent, EIF4E-dependent translation of viral genomic RNAs (By similarity). Binds to the cap-binding site of host EIF4E and thus interferes with the host EIF4E-dependent mRNA export and translation (By similarity). VPg-RNA directly binds EIF4E and is a template for transcription (By similarity). Also forms trimeric complexes with EIF4E-EIF4G, which are templates for translation (By similarity).</text>
</comment>
<comment type="function">
    <molecule>Nuclear inclusion protein A</molecule>
    <text evidence="2">Has RNA-binding and proteolytic activities.</text>
</comment>
<comment type="function">
    <molecule>Nuclear inclusion protein B</molecule>
    <text>An RNA-dependent RNA polymerase that plays an essential role in the virus replication.</text>
</comment>
<comment type="function">
    <molecule>Capsid protein</molecule>
    <text evidence="2">Involved in aphid transmission, cell-to-cell and systemis movement, encapsidation of the viral RNA and in the regulation of viral RNA amplification.</text>
</comment>
<comment type="catalytic activity">
    <molecule>Nuclear inclusion protein B</molecule>
    <reaction evidence="8">
        <text>RNA(n) + a ribonucleoside 5'-triphosphate = RNA(n+1) + diphosphate</text>
        <dbReference type="Rhea" id="RHEA:21248"/>
        <dbReference type="Rhea" id="RHEA-COMP:14527"/>
        <dbReference type="Rhea" id="RHEA-COMP:17342"/>
        <dbReference type="ChEBI" id="CHEBI:33019"/>
        <dbReference type="ChEBI" id="CHEBI:61557"/>
        <dbReference type="ChEBI" id="CHEBI:140395"/>
        <dbReference type="EC" id="2.7.7.48"/>
    </reaction>
</comment>
<comment type="catalytic activity">
    <molecule>Nuclear inclusion protein A</molecule>
    <reaction evidence="2">
        <text>Hydrolyzes glutaminyl bonds, and activity is further restricted by preferences for the amino acids in P6 - P1' that vary with the species of potyvirus, e.g. Glu-Xaa-Xaa-Tyr-Xaa-Gln-|-(Ser or Gly) for the enzyme from tobacco etch virus. The natural substrate is the viral polyprotein, but other proteins and oligopeptides containing the appropriate consensus sequence are also cleaved.</text>
        <dbReference type="EC" id="3.4.22.44"/>
    </reaction>
</comment>
<comment type="catalytic activity">
    <molecule>Helper component proteinase</molecule>
    <reaction evidence="2">
        <text>Hydrolyzes a Gly-|-Gly bond at its own C-terminus, commonly in the sequence -Tyr-Xaa-Val-Gly-|-Gly, in the processing of the potyviral polyprotein.</text>
        <dbReference type="EC" id="3.4.22.45"/>
    </reaction>
</comment>
<comment type="cofactor">
    <cofactor evidence="12">
        <name>Fe(2+)</name>
        <dbReference type="ChEBI" id="CHEBI:29033"/>
    </cofactor>
    <text evidence="12">Binds 1 Fe(2+) ion per subunit.</text>
</comment>
<comment type="subcellular location">
    <molecule>6 kDa protein 1</molecule>
    <subcellularLocation>
        <location>Host cytoplasmic vesicle</location>
    </subcellularLocation>
    <text evidence="4">Probably colocalizes with 6K2-induced vesicles associated with host chloroplasts.</text>
</comment>
<comment type="subcellular location">
    <molecule>6 kDa protein 2</molecule>
    <subcellularLocation>
        <location evidence="3">Host cytoplasmic vesicle</location>
    </subcellularLocation>
    <text evidence="3">6K-induced vesicles associate with host chloroplasts.</text>
</comment>
<comment type="subcellular location">
    <molecule>Capsid protein</molecule>
    <subcellularLocation>
        <location evidence="16">Virion</location>
    </subcellularLocation>
</comment>
<comment type="domain">
    <molecule>Helper component proteinase</molecule>
    <text>The N-terminus is involved in interaction with stylets. The central part is involved in interaction with virions and the C-terminus is involved in cell-to cell movement of the virus.</text>
</comment>
<comment type="PTM">
    <molecule>Viral genome-linked protein</molecule>
    <text evidence="3">VPg is uridylylated by the polymerase and is covalently attached to the 5'-end of the genomic RNA. This uridylylated form acts as a nucleotide-peptide primer for the polymerase (By similarity).</text>
</comment>
<comment type="PTM">
    <molecule>Genome polyprotein</molecule>
    <text evidence="1">Genome polyprotein of potyviruses undergoes post-translational proteolytic processing by the main proteinase NIa-pro resulting in the production of at least ten individual proteins. The P1 proteinase and the HC-pro cleave only their respective C-termini autocatalytically. 6K1 is essential for proper proteolytic separation of P3 from CI (By similarity).</text>
</comment>
<comment type="similarity">
    <text evidence="16">Belongs to the potyviridae genome polyprotein family.</text>
</comment>
<organism>
    <name type="scientific">Blackberry virus Y (isolate Blackberry plant/USA:Arkansas/C3ARK/2005)</name>
    <name type="common">BVY</name>
    <dbReference type="NCBI Taxonomy" id="686949"/>
    <lineage>
        <taxon>Viruses</taxon>
        <taxon>Riboviria</taxon>
        <taxon>Orthornavirae</taxon>
        <taxon>Pisuviricota</taxon>
        <taxon>Stelpaviricetes</taxon>
        <taxon>Patatavirales</taxon>
        <taxon>Potyviridae</taxon>
        <taxon>Brambyvirus</taxon>
        <taxon>Blackberry virus Y</taxon>
    </lineage>
</organism>
<proteinExistence type="evidence at protein level"/>
<name>POLG_BVY3</name>
<organismHost>
    <name type="scientific">Rubus fruticosus</name>
    <dbReference type="NCBI Taxonomy" id="211815"/>
</organismHost>
<feature type="chain" id="PRO_0000419995" description="Genome polyprotein">
    <location>
        <begin position="1"/>
        <end position="3491"/>
    </location>
</feature>
<feature type="chain" id="PRO_5000147981" description="P1 protease">
    <location>
        <begin position="1"/>
        <end position="745"/>
    </location>
</feature>
<feature type="chain" id="PRO_5000147982" description="Helper component proteinase">
    <location>
        <begin position="746"/>
        <end position="1070"/>
    </location>
</feature>
<feature type="chain" id="PRO_5000147983" description="Protein P3">
    <location>
        <begin position="1071"/>
        <end position="1420"/>
    </location>
</feature>
<feature type="chain" id="PRO_5000147984" description="6 kDa protein 1">
    <location>
        <begin position="1421"/>
        <end position="1476"/>
    </location>
</feature>
<feature type="chain" id="PRO_5000147985" description="Cytoplasmic inclusion protein">
    <location>
        <begin position="1477"/>
        <end position="2096"/>
    </location>
</feature>
<feature type="chain" id="PRO_5000147986" description="6 kDa protein 2">
    <location>
        <begin position="2097"/>
        <end position="2163"/>
    </location>
</feature>
<feature type="chain" id="PRO_5000147987" description="Viral genome-linked protein">
    <location>
        <begin position="2164"/>
        <end position="2353"/>
    </location>
</feature>
<feature type="chain" id="PRO_5000147988" description="Nuclear inclusion protein A">
    <location>
        <begin position="2354"/>
        <end position="2590"/>
    </location>
</feature>
<feature type="chain" id="PRO_5000147989" description="Nuclear inclusion protein B">
    <location>
        <begin position="2591"/>
        <end position="3143"/>
    </location>
</feature>
<feature type="chain" id="PRO_5000147990" description="Capsid protein">
    <location>
        <begin position="3144"/>
        <end position="3491"/>
    </location>
</feature>
<feature type="domain" description="Fe2OG dioxygenase" evidence="12">
    <location>
        <begin position="183"/>
        <end position="277"/>
    </location>
</feature>
<feature type="domain" description="Peptidase S30" evidence="14">
    <location>
        <begin position="589"/>
        <end position="745"/>
    </location>
</feature>
<feature type="domain" description="Peptidase C6" evidence="13">
    <location>
        <begin position="948"/>
        <end position="1070"/>
    </location>
</feature>
<feature type="domain" description="Helicase ATP-binding" evidence="9">
    <location>
        <begin position="1540"/>
        <end position="1692"/>
    </location>
</feature>
<feature type="domain" description="Helicase C-terminal" evidence="10">
    <location>
        <begin position="1696"/>
        <end position="1869"/>
    </location>
</feature>
<feature type="domain" description="Peptidase C4" evidence="11">
    <location>
        <begin position="2354"/>
        <end position="2570"/>
    </location>
</feature>
<feature type="domain" description="RdRp catalytic" evidence="8">
    <location>
        <begin position="2850"/>
        <end position="2974"/>
    </location>
</feature>
<feature type="region of interest" description="Disordered" evidence="15">
    <location>
        <begin position="559"/>
        <end position="588"/>
    </location>
</feature>
<feature type="region of interest" description="Disordered" evidence="15">
    <location>
        <begin position="3200"/>
        <end position="3279"/>
    </location>
</feature>
<feature type="region of interest" description="Disordered" evidence="15">
    <location>
        <begin position="3471"/>
        <end position="3491"/>
    </location>
</feature>
<feature type="short sequence motif" description="DEAH box">
    <location>
        <begin position="1642"/>
        <end position="1645"/>
    </location>
</feature>
<feature type="compositionally biased region" description="Basic residues" evidence="15">
    <location>
        <begin position="572"/>
        <end position="582"/>
    </location>
</feature>
<feature type="compositionally biased region" description="Basic and acidic residues" evidence="15">
    <location>
        <begin position="3236"/>
        <end position="3248"/>
    </location>
</feature>
<feature type="active site" description="For P1 proteinase activity" evidence="14">
    <location>
        <position position="640"/>
    </location>
</feature>
<feature type="active site" description="For P1 proteinase activity" evidence="14">
    <location>
        <position position="651"/>
    </location>
</feature>
<feature type="active site" description="For P1 proteinase activity" evidence="14">
    <location>
        <position position="692"/>
    </location>
</feature>
<feature type="active site" description="For helper component proteinase activity" evidence="13">
    <location>
        <position position="956"/>
    </location>
</feature>
<feature type="active site" description="For helper component proteinase activity" evidence="13">
    <location>
        <position position="1029"/>
    </location>
</feature>
<feature type="active site" description="For nuclear inclusion protein A activity" evidence="11">
    <location>
        <position position="2400"/>
    </location>
</feature>
<feature type="active site" description="For nuclear inclusion protein A activity" evidence="11">
    <location>
        <position position="2435"/>
    </location>
</feature>
<feature type="active site" description="For nuclear inclusion protein A activity" evidence="11">
    <location>
        <position position="2504"/>
    </location>
</feature>
<feature type="binding site" evidence="12">
    <location>
        <position position="201"/>
    </location>
    <ligand>
        <name>Fe cation</name>
        <dbReference type="ChEBI" id="CHEBI:24875"/>
    </ligand>
</feature>
<feature type="binding site" evidence="12">
    <location>
        <position position="203"/>
    </location>
    <ligand>
        <name>Fe cation</name>
        <dbReference type="ChEBI" id="CHEBI:24875"/>
    </ligand>
</feature>
<feature type="binding site" evidence="12">
    <location>
        <position position="259"/>
    </location>
    <ligand>
        <name>Fe cation</name>
        <dbReference type="ChEBI" id="CHEBI:24875"/>
    </ligand>
</feature>
<feature type="binding site" evidence="12">
    <location>
        <position position="268"/>
    </location>
    <ligand>
        <name>2-oxoglutarate</name>
        <dbReference type="ChEBI" id="CHEBI:16810"/>
    </ligand>
</feature>
<feature type="binding site" evidence="9">
    <location>
        <begin position="1553"/>
        <end position="1560"/>
    </location>
    <ligand>
        <name>ATP</name>
        <dbReference type="ChEBI" id="CHEBI:30616"/>
    </ligand>
</feature>
<feature type="site" description="Cleavage; by P1 proteinase" evidence="14">
    <location>
        <begin position="745"/>
        <end position="746"/>
    </location>
</feature>
<feature type="site" description="Cleavage; by autolysis" evidence="13">
    <location>
        <begin position="1070"/>
        <end position="1071"/>
    </location>
</feature>
<feature type="site" description="Cleavage; by NIa-pro" evidence="17">
    <location>
        <begin position="1420"/>
        <end position="1421"/>
    </location>
</feature>
<feature type="site" description="Cleavage; by NIa-pro" evidence="17">
    <location>
        <begin position="1476"/>
        <end position="1477"/>
    </location>
</feature>
<feature type="site" description="Cleavage; by NIa-pro" evidence="17">
    <location>
        <begin position="2096"/>
        <end position="2097"/>
    </location>
</feature>
<feature type="site" description="Cleavage; by NIa-pro" evidence="17">
    <location>
        <begin position="2163"/>
        <end position="2164"/>
    </location>
</feature>
<feature type="site" description="Cleavage; by NIa-pro" evidence="17">
    <location>
        <begin position="2353"/>
        <end position="2354"/>
    </location>
</feature>
<feature type="site" description="Cleavage; by NIa-pro" evidence="17">
    <location>
        <begin position="2590"/>
        <end position="2591"/>
    </location>
</feature>
<feature type="site" description="Cleavage; by NIa-pro" evidence="17">
    <location>
        <begin position="3143"/>
        <end position="3144"/>
    </location>
</feature>
<feature type="modified residue" description="O-(5'-phospho-RNA)-tyrosine" evidence="3">
    <location>
        <position position="2238"/>
    </location>
</feature>
<feature type="modified residue" description="Phosphothreonine" evidence="5">
    <location>
        <position position="3473"/>
    </location>
</feature>
<protein>
    <recommendedName>
        <fullName>Genome polyprotein</fullName>
    </recommendedName>
    <component>
        <recommendedName>
            <fullName>P1 protease</fullName>
            <ecNumber>3.4.21.-</ecNumber>
        </recommendedName>
        <alternativeName>
            <fullName>Leader protease P1</fullName>
        </alternativeName>
        <alternativeName>
            <fullName>N-terminal protein</fullName>
        </alternativeName>
        <alternativeName>
            <fullName>P1 proteinase</fullName>
        </alternativeName>
    </component>
    <component>
        <recommendedName>
            <fullName>Helper component proteinase</fullName>
            <shortName>HC-pro</shortName>
            <ecNumber evidence="2">3.4.22.45</ecNumber>
        </recommendedName>
    </component>
    <component>
        <recommendedName>
            <fullName>Protein P3</fullName>
        </recommendedName>
    </component>
    <component>
        <recommendedName>
            <fullName>6 kDa protein 1</fullName>
            <shortName>6K1</shortName>
        </recommendedName>
    </component>
    <component>
        <recommendedName>
            <fullName>Cytoplasmic inclusion protein</fullName>
            <shortName>CI</shortName>
            <ecNumber>3.6.4.-</ecNumber>
        </recommendedName>
    </component>
    <component>
        <recommendedName>
            <fullName>6 kDa protein 2</fullName>
            <shortName>6K2</shortName>
        </recommendedName>
    </component>
    <component>
        <recommendedName>
            <fullName>Viral genome-linked protein</fullName>
        </recommendedName>
        <alternativeName>
            <fullName>VPg</fullName>
        </alternativeName>
    </component>
    <component>
        <recommendedName>
            <fullName>Nuclear inclusion protein A</fullName>
            <shortName>NI-a</shortName>
            <shortName>NIa</shortName>
            <ecNumber>3.4.22.44</ecNumber>
        </recommendedName>
        <alternativeName>
            <fullName>49 kDa proteinase</fullName>
            <shortName>49 kDa-Pro</shortName>
        </alternativeName>
        <alternativeName>
            <fullName>NIa-pro</fullName>
        </alternativeName>
    </component>
    <component>
        <recommendedName>
            <fullName>Nuclear inclusion protein B</fullName>
            <shortName>NI-b</shortName>
            <shortName>NIb</shortName>
            <ecNumber>2.7.7.48</ecNumber>
        </recommendedName>
        <alternativeName>
            <fullName>RNA-directed RNA polymerase</fullName>
        </alternativeName>
    </component>
    <component>
        <recommendedName>
            <fullName>Capsid protein</fullName>
            <shortName>CP</shortName>
        </recommendedName>
        <alternativeName>
            <fullName>Coat protein</fullName>
        </alternativeName>
    </component>
</protein>
<sequence length="3491" mass="393838">MPTRYRGADRYGNLGYDKVLQSKADAAKRRGLLFDHGSETYECPRCGEIWRNLDDYMAEGGKMHPKKCLPEECDSDEEQISSCNAALIHEKWGDLDSDTSSKLSEFYKEPSILTYTTRTHCVVEKMRSMTAPQCIEDIVGVRLHGRTAWFFSKDPTLQYGHHPIYYDTHPWNDELDKYLGGAKYNTALVQVYDGTRDLPYHKDDEPCYDITNNPIRTVNVTGTGDLCISKDKRRLYETIPMTSGTVITFPATMQENFYHAVRNPSAGRISITFRNQIRTVERQVAHSANKRWVPIVEARVTTNESRRGDNKQFQEAQSKLQTKTTINFGEFAAEVDGYYPTLSQDHKPALPKIIPELGLPTVDFIYVGNMRVPIDFKKNNVPAIVDTARHVAKIIDSQALTSEPIKVFTEQREVVGNVVTCTGTGFSVADAKEAKALLNGLMYNRASNLFICPSCSDAAVLPEALLTLEHKRSCELASMKKISLARNMQVHVKQEAVARLISQQNSISVPIATLSSCVRGSADTTQVSLHIDEEDSIVDAIHLPNDFITCDHEHAFETDSASDNDVETMKKSEKRRKRRKRNPPPVRQVITRAPVSNIICDVILTCLETQIPVEFIGKSCITFKPVRVGPVHTVGIQLKHQLHKTGFEVDDLPDRETTSDIILAATRALRRLRHAHSNAQQVHNSDITFGTSGAILPWSWLAHDVIVEGPVQDSLVVRGRNVVSGHVTNALNLQQDCLADDYLQYSEELQPLHDDLSELKPLNVINNELIRQNMHITTLYSNMSKLQNDALATKAEMKLPLFGVAQLVVNQLKYNTTTHEWGERGDYVRKFVGKFFADFPTTQVPKQYMTRTTNGHIRITAYKALSLTSDPEIMMSRRMTQPMLTTAKQADCVFQSTTGATCTSASCTTNSSGVVLSNKCADPAPNTLRVRTMWDDIIIELPLQGGRVHVPLEGLCFSTIFLHMYLLVPDESVKLFHRTVTERAMPSLGQWPTLRHLATWVLNLVAMFPVLSTTPMPEILVHHESQSVHIPDCLGTATSGYHRLNIVTPYDFIIFATEIGRNGCQEYRVGGFAHDIKYTVSLMQDKRKLLHELMLTPTWAFYALSSPTLLKILYRSGALKRTYEHAVMANHNAVDLVHELNFLPERVSRAQTLQDEITAWEANVGRVLQQVDGYLTRNHDPPLQRWYADASARLQHLKIDVDLLKNGFRSSQREHVEKKEQLLCDSFERLYNEQNSSLESLKTRCGMGSARALIKPSGKCESPEPAKQLSCKDLICSTKDKYALMLYTQADALKRKIVAGSQSAFTTVCAGVAYRATKVMLRTPFNLLNALNTYSLLIAAVNVMVLVQNYRRDQRKRAQYVNNLETQSMIRHYFAHLEQYIVNYVPRDEQFEVIKAKFDEEFPEYNVMFKEVYKERIQFQSADEGKNMCKIFASAILVMMVFDAHRADLMYKSFSQVRALFNTLYDSGNPFNIIFQAERTIAPTMDVIIQEPKPAIPSTSSCTFETWFRNCVNANNVIPVIPECDLLDFTRDTASSVVATLTSSVKREFVIRGFVGSGKSTYLPHLLTKHGKVLLCEPVRVLASNVFEALSGSPFYQSPTLLMRGTTKFGSGKITVATSGYAANYYNANRHRLNEFAYIIFDESHQHTAHNFLLRSILDVIGYEGTVLHVSATPIGKEIPFRTMHPVEVVNMSTLSFEDFAIGQRKQVRCDVFNKGANILVYVASYNDVDRMSTLLLERGLRVKKIDARTVANVNNITCDGSDGEPLYLVATNIVENGVTLNVDVVVDFGLCVKPVINALQRRVDYVKTPITWGQRIQRNGRVGRYKNGFCLNVGDVYKTPPIISEDVALESALMCFAANVPPIFDNVDPALFGQVTRPQVQTAQMFELPIYITTPMISDAGALQSDIYQVIKKFVLREGSIQLTQDATYLSNMSNWKTIADYFPDISDTHAMRHEKVPFFVKDFGENSYIALAEAIRKARNKSLGARGKLYGDVDATALLLQTDPGSLDRSIMIVETELVAQRSKLEDLNHHVHESTGMFQRYVSHLNHCLRGRYQTDQIQKNIEVLSNMRSTLVGYRQVVDKVEPEEIPHFVQQNPNITMIIDFQSDRTKADGFVKHGINGIYNYTKIASDTFSLLLIACVVIYYVVQYFFREMKSHITFEASGSRRNRLHLRDNKLIKGGYTWAGPSDDMEREFGPEYALKRDKFSEKKARKHMRERIQPRTNMGVKLAPFQVFYGFDVADYDVLQLFDPITGVKIDMDPRATAKEITEEVEDTPFNKEVWSDTHMPEKIQATFVKKGGVNREDVLKQVRVDMTTHNPTMVTGSGGIMGYPEHKGDFRQTGPPKFSIVPEGRSTIKSGNNIAPFISAMGTIKNVYMNGDFDTLACTQIGNKLVVNAHIFMEPVKKQELILQHGVYELPNNGTINIKHVPGIDMVIQTLPMDVPLARQIKAYRGPIPGELIRLLKIERNTKTNSTSLSDPGTARVGPGTIWYHNITTKHGDCGSLVLSEKDNKIVGIHTGQQDGTNLNLFAPITKDAIVAIETVLPGELNDWVFTPDMLDVGSNNAIRKQASDPFPVVKKLLEGITFQNNRTTTTDSVSNTAILPARKYWVASDLPVNIKYQCDMPTFFNTRHTYEGESQPFMAYLRECGDAETFFRPLLSHYIPSNLNGDAFKKDFFKYGKPVPVGLVHGPSFKIASDRVIKRFERVGYERHSIPFEFDAEAIRDDLNKHAAMGAQYVGKKEQHLDGISEEQFCDEFVASCCRLANNCDGVWKGSLKAELRSKEKVQENKTRVFTSAPYDVLLGGKACVMHFNKKFYANNTKGPWTVGINKLGLGWHRLLKSLPEGFVYGTGDGSQFDSSLTPLLINEVCRIRMYFMQDDELGQAMLRGLYRQIIWTLISMPDGSVVRKAKGNPSGQPSTVDDNTIMVMLAVEYVFAYLGITQEEMDTIFKYYANGDDLIFAIHPDRESILNEFTHLFAHLGLNYIFEDRTRNRAELEYMSLTGIEREGFYIPKLSRERISSIVQWRRKGDTRAMFDALNAAILESWGYDDLTYWLRKYYEWLIINRYDIDLPEGEKLPYHTETAVETLYTCDDNTTVYDGRYDFEVPTDASGGVFIIDFQSSSGTDTPPVIPPATSEPALQPVLTRQTSRPPTPPNTILTGQQQQQLMPKSSQPYQLEPLLAPTGVQQPTFGTFGMPQAQQTTTEPVVAAARVRGKQKEGDTSLSQVRDHRRLSPERIVRHDDDLAPPNESTSGESSHYDELTLPDVPRDKRKGLGARLKGKPIITQTQIYNYRPAFGSIHNNKATDIELEAWKKQIADYFQVDDVSTLILGFMAYVIENGTSPEIFTNQKFVMATSSGEQREYPLAPFRSRSVELRKIMRRFSEEAIDYIQIQREHNPQYVPRQAVVRNVKRAIYFPYCFDFIDETILTPDALEIVHQMKAAALESASSKVLGLDGGSARAIDTERHTTEDATARTHNLRGAAMMA</sequence>
<keyword id="KW-0067">ATP-binding</keyword>
<keyword id="KW-0167">Capsid protein</keyword>
<keyword id="KW-0191">Covalent protein-RNA linkage</keyword>
<keyword id="KW-0223">Dioxygenase</keyword>
<keyword id="KW-1139">Helical capsid protein</keyword>
<keyword id="KW-0347">Helicase</keyword>
<keyword id="KW-1036">Host cytoplasmic vesicle</keyword>
<keyword id="KW-0945">Host-virus interaction</keyword>
<keyword id="KW-0378">Hydrolase</keyword>
<keyword id="KW-1090">Inhibition of host innate immune response by virus</keyword>
<keyword id="KW-0408">Iron</keyword>
<keyword id="KW-0479">Metal-binding</keyword>
<keyword id="KW-0547">Nucleotide-binding</keyword>
<keyword id="KW-0548">Nucleotidyltransferase</keyword>
<keyword id="KW-0560">Oxidoreductase</keyword>
<keyword id="KW-0597">Phosphoprotein</keyword>
<keyword id="KW-0645">Protease</keyword>
<keyword id="KW-1185">Reference proteome</keyword>
<keyword id="KW-0696">RNA-directed RNA polymerase</keyword>
<keyword id="KW-0720">Serine protease</keyword>
<keyword id="KW-0941">Suppressor of RNA silencing</keyword>
<keyword id="KW-0788">Thiol protease</keyword>
<keyword id="KW-0808">Transferase</keyword>
<keyword id="KW-0899">Viral immunoevasion</keyword>
<keyword id="KW-0693">Viral RNA replication</keyword>
<keyword id="KW-0946">Virion</keyword>
<reference key="1">
    <citation type="journal article" date="2008" name="Virus Res.">
        <title>A member of a new genus in the Potyviridae infects Rubus.</title>
        <authorList>
            <person name="Susaimuthu J."/>
            <person name="Tzanetakis I.E."/>
            <person name="Gergerich R.C."/>
            <person name="Martin R.R."/>
        </authorList>
    </citation>
    <scope>NUCLEOTIDE SEQUENCE [GENOMIC RNA]</scope>
</reference>
<reference key="2">
    <citation type="journal article" date="2021" name="PLoS ONE">
        <title>Analysis of proteolytic processing sites in potyvirus polyproteins revealed differential amino acid preferences of NIa-Pro protease in each of seven cleavage sites.</title>
        <authorList>
            <person name="Goh C.J."/>
            <person name="Hahn Y."/>
        </authorList>
    </citation>
    <scope>PROTEOLYTIC CLEAVAGE (GENOME POLYPROTEIN)</scope>
</reference>